<comment type="function">
    <text evidence="1">Putative sodium-dependent transporter.</text>
</comment>
<comment type="subcellular location">
    <subcellularLocation>
        <location evidence="3">Cell membrane</location>
        <topology evidence="3">Multi-pass membrane protein</topology>
    </subcellularLocation>
</comment>
<comment type="similarity">
    <text evidence="3">Belongs to the sodium:neurotransmitter symporter (SNF) (TC 2.A.22) family.</text>
</comment>
<evidence type="ECO:0000250" key="1"/>
<evidence type="ECO:0000255" key="2"/>
<evidence type="ECO:0000305" key="3"/>
<organism>
    <name type="scientific">Bacillus subtilis (strain 168)</name>
    <dbReference type="NCBI Taxonomy" id="224308"/>
    <lineage>
        <taxon>Bacteria</taxon>
        <taxon>Bacillati</taxon>
        <taxon>Bacillota</taxon>
        <taxon>Bacilli</taxon>
        <taxon>Bacillales</taxon>
        <taxon>Bacillaceae</taxon>
        <taxon>Bacillus</taxon>
    </lineage>
</organism>
<proteinExistence type="inferred from homology"/>
<sequence>MSEQKPVQWASKIGFVMAAAGSAIGLGAIWKFPYVAGTNGGGAFFLIFVLFTILLGYPLLVGEFIFGRRNQTNAIDAYKKEAPRSAWFLTGWIGVAACFLVLSFYSVIGGWILLYIVKTASGSLSGLSQAQYGALFASIIQNPVQTLAAQLVFMALTVLVVARGVQKGIERVSAVMMPILFLLFILLVLRSLTLNGAMEGVKFLLVPHFGDLTPESILFALGQAFFTLTLGVSVMVTYSSYLPKTQNIPRSAASIVLMNIIVTLLAGLAIFPAVFSFGFQPNEGPTLLFTVLPAVFEQLPFGTLFFIGFLVAFLFAALTSAFSMVEIIVATIGKGDEKKRKKLSWTSGLLIFLVGIPCCLSYGVLSDVHLFGKTFFDIADFTVSNVLMPSGALLISLFIPLKISKSELLAEMRNGSNAGKAFFYTWFYLLRFIVPLAIIIVFLNLIGILSF</sequence>
<keyword id="KW-1003">Cell membrane</keyword>
<keyword id="KW-0472">Membrane</keyword>
<keyword id="KW-1185">Reference proteome</keyword>
<keyword id="KW-0769">Symport</keyword>
<keyword id="KW-0812">Transmembrane</keyword>
<keyword id="KW-1133">Transmembrane helix</keyword>
<keyword id="KW-0813">Transport</keyword>
<feature type="chain" id="PRO_0000377430" description="Uncharacterized sodium-dependent transporter YhdH">
    <location>
        <begin position="1"/>
        <end position="451"/>
    </location>
</feature>
<feature type="transmembrane region" description="Helical" evidence="2">
    <location>
        <begin position="13"/>
        <end position="33"/>
    </location>
</feature>
<feature type="transmembrane region" description="Helical" evidence="2">
    <location>
        <begin position="41"/>
        <end position="61"/>
    </location>
</feature>
<feature type="transmembrane region" description="Helical" evidence="2">
    <location>
        <begin position="97"/>
        <end position="117"/>
    </location>
</feature>
<feature type="transmembrane region" description="Helical" evidence="2">
    <location>
        <begin position="142"/>
        <end position="162"/>
    </location>
</feature>
<feature type="transmembrane region" description="Helical" evidence="2">
    <location>
        <begin position="174"/>
        <end position="194"/>
    </location>
</feature>
<feature type="transmembrane region" description="Helical" evidence="2">
    <location>
        <begin position="217"/>
        <end position="237"/>
    </location>
</feature>
<feature type="transmembrane region" description="Helical" evidence="2">
    <location>
        <begin position="255"/>
        <end position="275"/>
    </location>
</feature>
<feature type="transmembrane region" description="Helical" evidence="2">
    <location>
        <begin position="299"/>
        <end position="319"/>
    </location>
</feature>
<feature type="transmembrane region" description="Helical" evidence="2">
    <location>
        <begin position="345"/>
        <end position="365"/>
    </location>
</feature>
<feature type="transmembrane region" description="Helical" evidence="2">
    <location>
        <begin position="381"/>
        <end position="401"/>
    </location>
</feature>
<feature type="transmembrane region" description="Helical" evidence="2">
    <location>
        <begin position="429"/>
        <end position="449"/>
    </location>
</feature>
<dbReference type="EMBL" id="Y14082">
    <property type="protein sequence ID" value="CAA74492.1"/>
    <property type="molecule type" value="Genomic_DNA"/>
</dbReference>
<dbReference type="EMBL" id="AL009126">
    <property type="protein sequence ID" value="CAB12786.1"/>
    <property type="molecule type" value="Genomic_DNA"/>
</dbReference>
<dbReference type="PIR" id="F69825">
    <property type="entry name" value="F69825"/>
</dbReference>
<dbReference type="RefSeq" id="NP_388828.1">
    <property type="nucleotide sequence ID" value="NC_000964.3"/>
</dbReference>
<dbReference type="RefSeq" id="WP_003245615.1">
    <property type="nucleotide sequence ID" value="NZ_OZ025638.1"/>
</dbReference>
<dbReference type="SMR" id="O07577"/>
<dbReference type="FunCoup" id="O07577">
    <property type="interactions" value="201"/>
</dbReference>
<dbReference type="PaxDb" id="224308-BSU09470"/>
<dbReference type="EnsemblBacteria" id="CAB12786">
    <property type="protein sequence ID" value="CAB12786"/>
    <property type="gene ID" value="BSU_09470"/>
</dbReference>
<dbReference type="GeneID" id="936264"/>
<dbReference type="KEGG" id="bsu:BSU09470"/>
<dbReference type="PATRIC" id="fig|224308.179.peg.1020"/>
<dbReference type="eggNOG" id="COG0733">
    <property type="taxonomic scope" value="Bacteria"/>
</dbReference>
<dbReference type="InParanoid" id="O07577"/>
<dbReference type="OrthoDB" id="9762833at2"/>
<dbReference type="PhylomeDB" id="O07577"/>
<dbReference type="BioCyc" id="BSUB:BSU09470-MONOMER"/>
<dbReference type="Proteomes" id="UP000001570">
    <property type="component" value="Chromosome"/>
</dbReference>
<dbReference type="GO" id="GO:0005886">
    <property type="term" value="C:plasma membrane"/>
    <property type="evidence" value="ECO:0007669"/>
    <property type="project" value="UniProtKB-SubCell"/>
</dbReference>
<dbReference type="GO" id="GO:0015293">
    <property type="term" value="F:symporter activity"/>
    <property type="evidence" value="ECO:0007669"/>
    <property type="project" value="UniProtKB-KW"/>
</dbReference>
<dbReference type="CDD" id="cd10336">
    <property type="entry name" value="SLC6sbd_Tyt1-Like"/>
    <property type="match status" value="1"/>
</dbReference>
<dbReference type="InterPro" id="IPR000175">
    <property type="entry name" value="Na/ntran_symport"/>
</dbReference>
<dbReference type="InterPro" id="IPR037272">
    <property type="entry name" value="SNS_sf"/>
</dbReference>
<dbReference type="InterPro" id="IPR047218">
    <property type="entry name" value="YocR/YhdH-like"/>
</dbReference>
<dbReference type="NCBIfam" id="NF037979">
    <property type="entry name" value="Na_transp"/>
    <property type="match status" value="1"/>
</dbReference>
<dbReference type="PANTHER" id="PTHR42948">
    <property type="entry name" value="TRANSPORTER"/>
    <property type="match status" value="1"/>
</dbReference>
<dbReference type="PANTHER" id="PTHR42948:SF1">
    <property type="entry name" value="TRANSPORTER"/>
    <property type="match status" value="1"/>
</dbReference>
<dbReference type="Pfam" id="PF00209">
    <property type="entry name" value="SNF"/>
    <property type="match status" value="2"/>
</dbReference>
<dbReference type="PRINTS" id="PR00176">
    <property type="entry name" value="NANEUSMPORT"/>
</dbReference>
<dbReference type="SUPFAM" id="SSF161070">
    <property type="entry name" value="SNF-like"/>
    <property type="match status" value="1"/>
</dbReference>
<dbReference type="PROSITE" id="PS00610">
    <property type="entry name" value="NA_NEUROTRAN_SYMP_1"/>
    <property type="match status" value="1"/>
</dbReference>
<dbReference type="PROSITE" id="PS50267">
    <property type="entry name" value="NA_NEUROTRAN_SYMP_3"/>
    <property type="match status" value="1"/>
</dbReference>
<reference key="1">
    <citation type="journal article" date="1998" name="Microbiology">
        <title>The 172 kb prkA-addAB region from 83 degrees to 97 degrees of the Bacillus subtilis chromosome contains several dysfunctional genes, the glyB marker, many genes encoding transporter proteins, and the ubiquitous hit gene.</title>
        <authorList>
            <person name="Noback M.A."/>
            <person name="Holsappel S."/>
            <person name="Kiewiet R."/>
            <person name="Terpstra P."/>
            <person name="Wambutt R."/>
            <person name="Wedler H."/>
            <person name="Venema G."/>
            <person name="Bron S."/>
        </authorList>
    </citation>
    <scope>NUCLEOTIDE SEQUENCE [GENOMIC DNA]</scope>
    <source>
        <strain>168</strain>
    </source>
</reference>
<reference key="2">
    <citation type="journal article" date="1997" name="Nature">
        <title>The complete genome sequence of the Gram-positive bacterium Bacillus subtilis.</title>
        <authorList>
            <person name="Kunst F."/>
            <person name="Ogasawara N."/>
            <person name="Moszer I."/>
            <person name="Albertini A.M."/>
            <person name="Alloni G."/>
            <person name="Azevedo V."/>
            <person name="Bertero M.G."/>
            <person name="Bessieres P."/>
            <person name="Bolotin A."/>
            <person name="Borchert S."/>
            <person name="Borriss R."/>
            <person name="Boursier L."/>
            <person name="Brans A."/>
            <person name="Braun M."/>
            <person name="Brignell S.C."/>
            <person name="Bron S."/>
            <person name="Brouillet S."/>
            <person name="Bruschi C.V."/>
            <person name="Caldwell B."/>
            <person name="Capuano V."/>
            <person name="Carter N.M."/>
            <person name="Choi S.-K."/>
            <person name="Codani J.-J."/>
            <person name="Connerton I.F."/>
            <person name="Cummings N.J."/>
            <person name="Daniel R.A."/>
            <person name="Denizot F."/>
            <person name="Devine K.M."/>
            <person name="Duesterhoeft A."/>
            <person name="Ehrlich S.D."/>
            <person name="Emmerson P.T."/>
            <person name="Entian K.-D."/>
            <person name="Errington J."/>
            <person name="Fabret C."/>
            <person name="Ferrari E."/>
            <person name="Foulger D."/>
            <person name="Fritz C."/>
            <person name="Fujita M."/>
            <person name="Fujita Y."/>
            <person name="Fuma S."/>
            <person name="Galizzi A."/>
            <person name="Galleron N."/>
            <person name="Ghim S.-Y."/>
            <person name="Glaser P."/>
            <person name="Goffeau A."/>
            <person name="Golightly E.J."/>
            <person name="Grandi G."/>
            <person name="Guiseppi G."/>
            <person name="Guy B.J."/>
            <person name="Haga K."/>
            <person name="Haiech J."/>
            <person name="Harwood C.R."/>
            <person name="Henaut A."/>
            <person name="Hilbert H."/>
            <person name="Holsappel S."/>
            <person name="Hosono S."/>
            <person name="Hullo M.-F."/>
            <person name="Itaya M."/>
            <person name="Jones L.-M."/>
            <person name="Joris B."/>
            <person name="Karamata D."/>
            <person name="Kasahara Y."/>
            <person name="Klaerr-Blanchard M."/>
            <person name="Klein C."/>
            <person name="Kobayashi Y."/>
            <person name="Koetter P."/>
            <person name="Koningstein G."/>
            <person name="Krogh S."/>
            <person name="Kumano M."/>
            <person name="Kurita K."/>
            <person name="Lapidus A."/>
            <person name="Lardinois S."/>
            <person name="Lauber J."/>
            <person name="Lazarevic V."/>
            <person name="Lee S.-M."/>
            <person name="Levine A."/>
            <person name="Liu H."/>
            <person name="Masuda S."/>
            <person name="Mauel C."/>
            <person name="Medigue C."/>
            <person name="Medina N."/>
            <person name="Mellado R.P."/>
            <person name="Mizuno M."/>
            <person name="Moestl D."/>
            <person name="Nakai S."/>
            <person name="Noback M."/>
            <person name="Noone D."/>
            <person name="O'Reilly M."/>
            <person name="Ogawa K."/>
            <person name="Ogiwara A."/>
            <person name="Oudega B."/>
            <person name="Park S.-H."/>
            <person name="Parro V."/>
            <person name="Pohl T.M."/>
            <person name="Portetelle D."/>
            <person name="Porwollik S."/>
            <person name="Prescott A.M."/>
            <person name="Presecan E."/>
            <person name="Pujic P."/>
            <person name="Purnelle B."/>
            <person name="Rapoport G."/>
            <person name="Rey M."/>
            <person name="Reynolds S."/>
            <person name="Rieger M."/>
            <person name="Rivolta C."/>
            <person name="Rocha E."/>
            <person name="Roche B."/>
            <person name="Rose M."/>
            <person name="Sadaie Y."/>
            <person name="Sato T."/>
            <person name="Scanlan E."/>
            <person name="Schleich S."/>
            <person name="Schroeter R."/>
            <person name="Scoffone F."/>
            <person name="Sekiguchi J."/>
            <person name="Sekowska A."/>
            <person name="Seror S.J."/>
            <person name="Serror P."/>
            <person name="Shin B.-S."/>
            <person name="Soldo B."/>
            <person name="Sorokin A."/>
            <person name="Tacconi E."/>
            <person name="Takagi T."/>
            <person name="Takahashi H."/>
            <person name="Takemaru K."/>
            <person name="Takeuchi M."/>
            <person name="Tamakoshi A."/>
            <person name="Tanaka T."/>
            <person name="Terpstra P."/>
            <person name="Tognoni A."/>
            <person name="Tosato V."/>
            <person name="Uchiyama S."/>
            <person name="Vandenbol M."/>
            <person name="Vannier F."/>
            <person name="Vassarotti A."/>
            <person name="Viari A."/>
            <person name="Wambutt R."/>
            <person name="Wedler E."/>
            <person name="Wedler H."/>
            <person name="Weitzenegger T."/>
            <person name="Winters P."/>
            <person name="Wipat A."/>
            <person name="Yamamoto H."/>
            <person name="Yamane K."/>
            <person name="Yasumoto K."/>
            <person name="Yata K."/>
            <person name="Yoshida K."/>
            <person name="Yoshikawa H.-F."/>
            <person name="Zumstein E."/>
            <person name="Yoshikawa H."/>
            <person name="Danchin A."/>
        </authorList>
    </citation>
    <scope>NUCLEOTIDE SEQUENCE [LARGE SCALE GENOMIC DNA]</scope>
    <source>
        <strain>168</strain>
    </source>
</reference>
<name>YHDH_BACSU</name>
<gene>
    <name type="primary">yhdH</name>
    <name type="ordered locus">BSU09470</name>
</gene>
<accession>O07577</accession>
<accession>Q796X6</accession>
<protein>
    <recommendedName>
        <fullName>Uncharacterized sodium-dependent transporter YhdH</fullName>
    </recommendedName>
</protein>